<reference key="1">
    <citation type="submission" date="2006-08" db="EMBL/GenBank/DDBJ databases">
        <title>Complete sequence of chromosome 1 of Burkholderia cenocepacia HI2424.</title>
        <authorList>
            <person name="Copeland A."/>
            <person name="Lucas S."/>
            <person name="Lapidus A."/>
            <person name="Barry K."/>
            <person name="Detter J.C."/>
            <person name="Glavina del Rio T."/>
            <person name="Hammon N."/>
            <person name="Israni S."/>
            <person name="Pitluck S."/>
            <person name="Chain P."/>
            <person name="Malfatti S."/>
            <person name="Shin M."/>
            <person name="Vergez L."/>
            <person name="Schmutz J."/>
            <person name="Larimer F."/>
            <person name="Land M."/>
            <person name="Hauser L."/>
            <person name="Kyrpides N."/>
            <person name="Kim E."/>
            <person name="LiPuma J.J."/>
            <person name="Gonzalez C.F."/>
            <person name="Konstantinidis K."/>
            <person name="Tiedje J.M."/>
            <person name="Richardson P."/>
        </authorList>
    </citation>
    <scope>NUCLEOTIDE SEQUENCE [LARGE SCALE GENOMIC DNA]</scope>
    <source>
        <strain>HI2424</strain>
    </source>
</reference>
<accession>A0K6T5</accession>
<sequence>MSGNTLGTLFTVTTFGESHGPAIGCVIDGCPPGMGLTEADIQIELDRRKPGTSRHVTQRQEADEVEILSGVFEGVTTGTPIALLIRNTDQRSKDYGNIVETFRPGHADYTYWQKYGIRDYRGGGRSSARLTAPIVGAGAVAKKWLRERFGVEVRGYMSGLGEIDVPFVDWSHVHENPFFSPNAAVVPELEAYMDALRKDGDSIGARIDVVASGVPVGWGEPVFDRLDADIAKAMMSINAVKGVEIGAGFDSVAQRGSVHGDELTPAGFVGNHAGGVLGGISTGQDITVSIAIKPTSSIRTPRRSITKSGDEATVETFGRHDPCVGIRATPIAESMLALVLIDHALRHRAQCGDVETSTPKIAGSAT</sequence>
<comment type="function">
    <text evidence="1">Catalyzes the anti-1,4-elimination of the C-3 phosphate and the C-6 proR hydrogen from 5-enolpyruvylshikimate-3-phosphate (EPSP) to yield chorismate, which is the branch point compound that serves as the starting substrate for the three terminal pathways of aromatic amino acid biosynthesis. This reaction introduces a second double bond into the aromatic ring system.</text>
</comment>
<comment type="catalytic activity">
    <reaction evidence="1">
        <text>5-O-(1-carboxyvinyl)-3-phosphoshikimate = chorismate + phosphate</text>
        <dbReference type="Rhea" id="RHEA:21020"/>
        <dbReference type="ChEBI" id="CHEBI:29748"/>
        <dbReference type="ChEBI" id="CHEBI:43474"/>
        <dbReference type="ChEBI" id="CHEBI:57701"/>
        <dbReference type="EC" id="4.2.3.5"/>
    </reaction>
</comment>
<comment type="cofactor">
    <cofactor evidence="1">
        <name>FMNH2</name>
        <dbReference type="ChEBI" id="CHEBI:57618"/>
    </cofactor>
    <text evidence="1">Reduced FMN (FMNH(2)).</text>
</comment>
<comment type="pathway">
    <text evidence="1">Metabolic intermediate biosynthesis; chorismate biosynthesis; chorismate from D-erythrose 4-phosphate and phosphoenolpyruvate: step 7/7.</text>
</comment>
<comment type="subunit">
    <text evidence="1">Homotetramer.</text>
</comment>
<comment type="similarity">
    <text evidence="1">Belongs to the chorismate synthase family.</text>
</comment>
<gene>
    <name evidence="1" type="primary">aroC</name>
    <name type="ordered locus">Bcen2424_1460</name>
</gene>
<organism>
    <name type="scientific">Burkholderia cenocepacia (strain HI2424)</name>
    <dbReference type="NCBI Taxonomy" id="331272"/>
    <lineage>
        <taxon>Bacteria</taxon>
        <taxon>Pseudomonadati</taxon>
        <taxon>Pseudomonadota</taxon>
        <taxon>Betaproteobacteria</taxon>
        <taxon>Burkholderiales</taxon>
        <taxon>Burkholderiaceae</taxon>
        <taxon>Burkholderia</taxon>
        <taxon>Burkholderia cepacia complex</taxon>
    </lineage>
</organism>
<keyword id="KW-0028">Amino-acid biosynthesis</keyword>
<keyword id="KW-0057">Aromatic amino acid biosynthesis</keyword>
<keyword id="KW-0274">FAD</keyword>
<keyword id="KW-0285">Flavoprotein</keyword>
<keyword id="KW-0288">FMN</keyword>
<keyword id="KW-0456">Lyase</keyword>
<keyword id="KW-0521">NADP</keyword>
<evidence type="ECO:0000255" key="1">
    <source>
        <dbReference type="HAMAP-Rule" id="MF_00300"/>
    </source>
</evidence>
<dbReference type="EC" id="4.2.3.5" evidence="1"/>
<dbReference type="EMBL" id="CP000458">
    <property type="protein sequence ID" value="ABK08212.1"/>
    <property type="molecule type" value="Genomic_DNA"/>
</dbReference>
<dbReference type="RefSeq" id="WP_011545234.1">
    <property type="nucleotide sequence ID" value="NC_008542.1"/>
</dbReference>
<dbReference type="SMR" id="A0K6T5"/>
<dbReference type="KEGG" id="bch:Bcen2424_1460"/>
<dbReference type="HOGENOM" id="CLU_034547_0_2_4"/>
<dbReference type="UniPathway" id="UPA00053">
    <property type="reaction ID" value="UER00090"/>
</dbReference>
<dbReference type="GO" id="GO:0005829">
    <property type="term" value="C:cytosol"/>
    <property type="evidence" value="ECO:0007669"/>
    <property type="project" value="TreeGrafter"/>
</dbReference>
<dbReference type="GO" id="GO:0004107">
    <property type="term" value="F:chorismate synthase activity"/>
    <property type="evidence" value="ECO:0007669"/>
    <property type="project" value="UniProtKB-UniRule"/>
</dbReference>
<dbReference type="GO" id="GO:0010181">
    <property type="term" value="F:FMN binding"/>
    <property type="evidence" value="ECO:0007669"/>
    <property type="project" value="TreeGrafter"/>
</dbReference>
<dbReference type="GO" id="GO:0008652">
    <property type="term" value="P:amino acid biosynthetic process"/>
    <property type="evidence" value="ECO:0007669"/>
    <property type="project" value="UniProtKB-KW"/>
</dbReference>
<dbReference type="GO" id="GO:0009073">
    <property type="term" value="P:aromatic amino acid family biosynthetic process"/>
    <property type="evidence" value="ECO:0007669"/>
    <property type="project" value="UniProtKB-KW"/>
</dbReference>
<dbReference type="GO" id="GO:0009423">
    <property type="term" value="P:chorismate biosynthetic process"/>
    <property type="evidence" value="ECO:0007669"/>
    <property type="project" value="UniProtKB-UniRule"/>
</dbReference>
<dbReference type="CDD" id="cd07304">
    <property type="entry name" value="Chorismate_synthase"/>
    <property type="match status" value="1"/>
</dbReference>
<dbReference type="FunFam" id="3.60.150.10:FF:000001">
    <property type="entry name" value="Chorismate synthase"/>
    <property type="match status" value="1"/>
</dbReference>
<dbReference type="Gene3D" id="3.60.150.10">
    <property type="entry name" value="Chorismate synthase AroC"/>
    <property type="match status" value="1"/>
</dbReference>
<dbReference type="HAMAP" id="MF_00300">
    <property type="entry name" value="Chorismate_synth"/>
    <property type="match status" value="1"/>
</dbReference>
<dbReference type="InterPro" id="IPR000453">
    <property type="entry name" value="Chorismate_synth"/>
</dbReference>
<dbReference type="InterPro" id="IPR035904">
    <property type="entry name" value="Chorismate_synth_AroC_sf"/>
</dbReference>
<dbReference type="InterPro" id="IPR020541">
    <property type="entry name" value="Chorismate_synthase_CS"/>
</dbReference>
<dbReference type="NCBIfam" id="TIGR00033">
    <property type="entry name" value="aroC"/>
    <property type="match status" value="1"/>
</dbReference>
<dbReference type="NCBIfam" id="NF003793">
    <property type="entry name" value="PRK05382.1"/>
    <property type="match status" value="1"/>
</dbReference>
<dbReference type="PANTHER" id="PTHR21085">
    <property type="entry name" value="CHORISMATE SYNTHASE"/>
    <property type="match status" value="1"/>
</dbReference>
<dbReference type="PANTHER" id="PTHR21085:SF0">
    <property type="entry name" value="CHORISMATE SYNTHASE"/>
    <property type="match status" value="1"/>
</dbReference>
<dbReference type="Pfam" id="PF01264">
    <property type="entry name" value="Chorismate_synt"/>
    <property type="match status" value="1"/>
</dbReference>
<dbReference type="PIRSF" id="PIRSF001456">
    <property type="entry name" value="Chorismate_synth"/>
    <property type="match status" value="1"/>
</dbReference>
<dbReference type="SUPFAM" id="SSF103263">
    <property type="entry name" value="Chorismate synthase, AroC"/>
    <property type="match status" value="1"/>
</dbReference>
<dbReference type="PROSITE" id="PS00787">
    <property type="entry name" value="CHORISMATE_SYNTHASE_1"/>
    <property type="match status" value="1"/>
</dbReference>
<dbReference type="PROSITE" id="PS00788">
    <property type="entry name" value="CHORISMATE_SYNTHASE_2"/>
    <property type="match status" value="1"/>
</dbReference>
<dbReference type="PROSITE" id="PS00789">
    <property type="entry name" value="CHORISMATE_SYNTHASE_3"/>
    <property type="match status" value="1"/>
</dbReference>
<protein>
    <recommendedName>
        <fullName evidence="1">Chorismate synthase</fullName>
        <shortName evidence="1">CS</shortName>
        <ecNumber evidence="1">4.2.3.5</ecNumber>
    </recommendedName>
    <alternativeName>
        <fullName evidence="1">5-enolpyruvylshikimate-3-phosphate phospholyase</fullName>
    </alternativeName>
</protein>
<proteinExistence type="inferred from homology"/>
<name>AROC_BURCH</name>
<feature type="chain" id="PRO_1000022466" description="Chorismate synthase">
    <location>
        <begin position="1"/>
        <end position="366"/>
    </location>
</feature>
<feature type="binding site" evidence="1">
    <location>
        <position position="48"/>
    </location>
    <ligand>
        <name>NADP(+)</name>
        <dbReference type="ChEBI" id="CHEBI:58349"/>
    </ligand>
</feature>
<feature type="binding site" evidence="1">
    <location>
        <position position="54"/>
    </location>
    <ligand>
        <name>NADP(+)</name>
        <dbReference type="ChEBI" id="CHEBI:58349"/>
    </ligand>
</feature>
<feature type="binding site" evidence="1">
    <location>
        <begin position="125"/>
        <end position="127"/>
    </location>
    <ligand>
        <name>FMN</name>
        <dbReference type="ChEBI" id="CHEBI:58210"/>
    </ligand>
</feature>
<feature type="binding site" evidence="1">
    <location>
        <begin position="238"/>
        <end position="239"/>
    </location>
    <ligand>
        <name>FMN</name>
        <dbReference type="ChEBI" id="CHEBI:58210"/>
    </ligand>
</feature>
<feature type="binding site" evidence="1">
    <location>
        <position position="278"/>
    </location>
    <ligand>
        <name>FMN</name>
        <dbReference type="ChEBI" id="CHEBI:58210"/>
    </ligand>
</feature>
<feature type="binding site" evidence="1">
    <location>
        <begin position="293"/>
        <end position="297"/>
    </location>
    <ligand>
        <name>FMN</name>
        <dbReference type="ChEBI" id="CHEBI:58210"/>
    </ligand>
</feature>
<feature type="binding site" evidence="1">
    <location>
        <position position="319"/>
    </location>
    <ligand>
        <name>FMN</name>
        <dbReference type="ChEBI" id="CHEBI:58210"/>
    </ligand>
</feature>